<reference key="1">
    <citation type="journal article" date="1998" name="Science">
        <title>Genome sequence of the nematode C. elegans: a platform for investigating biology.</title>
        <authorList>
            <consortium name="The C. elegans sequencing consortium"/>
        </authorList>
    </citation>
    <scope>NUCLEOTIDE SEQUENCE [LARGE SCALE GENOMIC DNA]</scope>
    <source>
        <strain>Bristol N2</strain>
    </source>
</reference>
<sequence>MSIAVGLSACALSSVLFGSMFVPVKKCHSGNGIFVQWIMSTAILLVGIVVYSTQGFPEFEPLAMLGGMFWALGNATAVPIMNTIGIGMGMLVWGTTNCVAGWAAGRFGLFGINSTVPEYPFLNYFGLVLVVFGGFLFSQIRPNEPQTASERSPLMVAPDDDLTDDVAPDDSDIVVPRGGAVPTRAHRNQKRLLAIITSLVAGVFYGFTFVPVIYIQDHPEIYPTAPKTGLGYVFSHYIGIFCTASALMIGYVIYSRNNPFASSRLVGPSMTAGSMWGIAQASWFVANDNLSQAVSFPIISMVPGVIAALWSVFYFRDISGSRNLRLLSIAVAITLIGAICVGVSK</sequence>
<organism>
    <name type="scientific">Caenorhabditis elegans</name>
    <dbReference type="NCBI Taxonomy" id="6239"/>
    <lineage>
        <taxon>Eukaryota</taxon>
        <taxon>Metazoa</taxon>
        <taxon>Ecdysozoa</taxon>
        <taxon>Nematoda</taxon>
        <taxon>Chromadorea</taxon>
        <taxon>Rhabditida</taxon>
        <taxon>Rhabditina</taxon>
        <taxon>Rhabditomorpha</taxon>
        <taxon>Rhabditoidea</taxon>
        <taxon>Rhabditidae</taxon>
        <taxon>Peloderinae</taxon>
        <taxon>Caenorhabditis</taxon>
    </lineage>
</organism>
<keyword id="KW-0472">Membrane</keyword>
<keyword id="KW-1185">Reference proteome</keyword>
<keyword id="KW-0812">Transmembrane</keyword>
<keyword id="KW-1133">Transmembrane helix</keyword>
<evidence type="ECO:0000255" key="1"/>
<evidence type="ECO:0000305" key="2"/>
<dbReference type="EMBL" id="FO080694">
    <property type="protein sequence ID" value="CCD65875.1"/>
    <property type="molecule type" value="Genomic_DNA"/>
</dbReference>
<dbReference type="RefSeq" id="NP_498062.2">
    <property type="nucleotide sequence ID" value="NM_065661.8"/>
</dbReference>
<dbReference type="BioGRID" id="40911">
    <property type="interactions" value="1"/>
</dbReference>
<dbReference type="FunCoup" id="Q10000">
    <property type="interactions" value="155"/>
</dbReference>
<dbReference type="TCDB" id="2.A.7.8.1">
    <property type="family name" value="the drug/metabolite transporter (dmt) superfamily"/>
</dbReference>
<dbReference type="PaxDb" id="6239-R144.6"/>
<dbReference type="PeptideAtlas" id="Q10000"/>
<dbReference type="EnsemblMetazoa" id="R144.6.1">
    <property type="protein sequence ID" value="R144.6.1"/>
    <property type="gene ID" value="WBGene00020096"/>
</dbReference>
<dbReference type="GeneID" id="175678"/>
<dbReference type="KEGG" id="cel:CELE_R144.6"/>
<dbReference type="UCSC" id="R144.6">
    <property type="organism name" value="c. elegans"/>
</dbReference>
<dbReference type="AGR" id="WB:WBGene00020096"/>
<dbReference type="CTD" id="175678"/>
<dbReference type="WormBase" id="R144.6">
    <property type="protein sequence ID" value="CE37549"/>
    <property type="gene ID" value="WBGene00020096"/>
</dbReference>
<dbReference type="eggNOG" id="ENOG502QR0F">
    <property type="taxonomic scope" value="Eukaryota"/>
</dbReference>
<dbReference type="GeneTree" id="ENSGT00390000012574"/>
<dbReference type="HOGENOM" id="CLU_031844_1_0_1"/>
<dbReference type="InParanoid" id="Q10000"/>
<dbReference type="OMA" id="MFFQWIV"/>
<dbReference type="OrthoDB" id="426527at2759"/>
<dbReference type="PhylomeDB" id="Q10000"/>
<dbReference type="PRO" id="PR:Q10000"/>
<dbReference type="Proteomes" id="UP000001940">
    <property type="component" value="Chromosome III"/>
</dbReference>
<dbReference type="Bgee" id="WBGene00020096">
    <property type="expression patterns" value="Expressed in germ line (C elegans) and 4 other cell types or tissues"/>
</dbReference>
<dbReference type="GO" id="GO:0016020">
    <property type="term" value="C:membrane"/>
    <property type="evidence" value="ECO:0007669"/>
    <property type="project" value="UniProtKB-SubCell"/>
</dbReference>
<dbReference type="GO" id="GO:0015144">
    <property type="term" value="F:carbohydrate transmembrane transporter activity"/>
    <property type="evidence" value="ECO:0007669"/>
    <property type="project" value="InterPro"/>
</dbReference>
<dbReference type="InterPro" id="IPR010651">
    <property type="entry name" value="Sugar_transport"/>
</dbReference>
<dbReference type="InterPro" id="IPR012435">
    <property type="entry name" value="TMEM144"/>
</dbReference>
<dbReference type="PANTHER" id="PTHR16119">
    <property type="entry name" value="TRANSMEMBRANE PROTEIN 144"/>
    <property type="match status" value="1"/>
</dbReference>
<dbReference type="PANTHER" id="PTHR16119:SF17">
    <property type="entry name" value="TRANSMEMBRANE PROTEIN 144"/>
    <property type="match status" value="1"/>
</dbReference>
<dbReference type="Pfam" id="PF07857">
    <property type="entry name" value="TMEM144"/>
    <property type="match status" value="1"/>
</dbReference>
<protein>
    <recommendedName>
        <fullName>Transmembrane protein 144 homolog</fullName>
    </recommendedName>
</protein>
<feature type="chain" id="PRO_0000065442" description="Transmembrane protein 144 homolog">
    <location>
        <begin position="1"/>
        <end position="345"/>
    </location>
</feature>
<feature type="transmembrane region" description="Helical" evidence="1">
    <location>
        <begin position="3"/>
        <end position="23"/>
    </location>
</feature>
<feature type="transmembrane region" description="Helical" evidence="1">
    <location>
        <begin position="32"/>
        <end position="52"/>
    </location>
</feature>
<feature type="transmembrane region" description="Helical" evidence="1">
    <location>
        <begin position="61"/>
        <end position="81"/>
    </location>
</feature>
<feature type="transmembrane region" description="Helical" evidence="1">
    <location>
        <begin position="84"/>
        <end position="104"/>
    </location>
</feature>
<feature type="transmembrane region" description="Helical" evidence="1">
    <location>
        <begin position="120"/>
        <end position="140"/>
    </location>
</feature>
<feature type="transmembrane region" description="Helical" evidence="1">
    <location>
        <begin position="193"/>
        <end position="213"/>
    </location>
</feature>
<feature type="transmembrane region" description="Helical" evidence="1">
    <location>
        <begin position="233"/>
        <end position="253"/>
    </location>
</feature>
<feature type="transmembrane region" description="Helical" evidence="1">
    <location>
        <begin position="265"/>
        <end position="285"/>
    </location>
</feature>
<feature type="transmembrane region" description="Helical" evidence="1">
    <location>
        <begin position="293"/>
        <end position="313"/>
    </location>
</feature>
<feature type="transmembrane region" description="Helical" evidence="1">
    <location>
        <begin position="324"/>
        <end position="344"/>
    </location>
</feature>
<name>TM144_CAEEL</name>
<proteinExistence type="inferred from homology"/>
<comment type="subcellular location">
    <subcellularLocation>
        <location evidence="2">Membrane</location>
        <topology evidence="2">Multi-pass membrane protein</topology>
    </subcellularLocation>
</comment>
<comment type="similarity">
    <text evidence="2">Belongs to the TMEM144 family.</text>
</comment>
<gene>
    <name type="ORF">R144.6</name>
</gene>
<accession>Q10000</accession>
<accession>Q629J4</accession>